<feature type="chain" id="PRO_0000136218" description="Histidine--tRNA ligase">
    <location>
        <begin position="1"/>
        <end position="422"/>
    </location>
</feature>
<organism>
    <name type="scientific">Photobacterium profundum (strain SS9)</name>
    <dbReference type="NCBI Taxonomy" id="298386"/>
    <lineage>
        <taxon>Bacteria</taxon>
        <taxon>Pseudomonadati</taxon>
        <taxon>Pseudomonadota</taxon>
        <taxon>Gammaproteobacteria</taxon>
        <taxon>Vibrionales</taxon>
        <taxon>Vibrionaceae</taxon>
        <taxon>Photobacterium</taxon>
    </lineage>
</organism>
<dbReference type="EC" id="6.1.1.21"/>
<dbReference type="EMBL" id="CR378665">
    <property type="protein sequence ID" value="CAG19177.1"/>
    <property type="molecule type" value="Genomic_DNA"/>
</dbReference>
<dbReference type="RefSeq" id="WP_011217519.1">
    <property type="nucleotide sequence ID" value="NC_006370.1"/>
</dbReference>
<dbReference type="SMR" id="P62373"/>
<dbReference type="STRING" id="298386.PBPRA0764"/>
<dbReference type="KEGG" id="ppr:PBPRA0764"/>
<dbReference type="eggNOG" id="COG0124">
    <property type="taxonomic scope" value="Bacteria"/>
</dbReference>
<dbReference type="HOGENOM" id="CLU_025113_1_1_6"/>
<dbReference type="Proteomes" id="UP000000593">
    <property type="component" value="Chromosome 1"/>
</dbReference>
<dbReference type="GO" id="GO:0005737">
    <property type="term" value="C:cytoplasm"/>
    <property type="evidence" value="ECO:0007669"/>
    <property type="project" value="UniProtKB-SubCell"/>
</dbReference>
<dbReference type="GO" id="GO:0005524">
    <property type="term" value="F:ATP binding"/>
    <property type="evidence" value="ECO:0007669"/>
    <property type="project" value="UniProtKB-UniRule"/>
</dbReference>
<dbReference type="GO" id="GO:0004821">
    <property type="term" value="F:histidine-tRNA ligase activity"/>
    <property type="evidence" value="ECO:0007669"/>
    <property type="project" value="UniProtKB-UniRule"/>
</dbReference>
<dbReference type="GO" id="GO:0006427">
    <property type="term" value="P:histidyl-tRNA aminoacylation"/>
    <property type="evidence" value="ECO:0007669"/>
    <property type="project" value="UniProtKB-UniRule"/>
</dbReference>
<dbReference type="CDD" id="cd00773">
    <property type="entry name" value="HisRS-like_core"/>
    <property type="match status" value="1"/>
</dbReference>
<dbReference type="CDD" id="cd00859">
    <property type="entry name" value="HisRS_anticodon"/>
    <property type="match status" value="1"/>
</dbReference>
<dbReference type="FunFam" id="3.30.930.10:FF:000005">
    <property type="entry name" value="Histidine--tRNA ligase"/>
    <property type="match status" value="1"/>
</dbReference>
<dbReference type="Gene3D" id="3.40.50.800">
    <property type="entry name" value="Anticodon-binding domain"/>
    <property type="match status" value="1"/>
</dbReference>
<dbReference type="Gene3D" id="3.30.930.10">
    <property type="entry name" value="Bira Bifunctional Protein, Domain 2"/>
    <property type="match status" value="1"/>
</dbReference>
<dbReference type="HAMAP" id="MF_00127">
    <property type="entry name" value="His_tRNA_synth"/>
    <property type="match status" value="1"/>
</dbReference>
<dbReference type="InterPro" id="IPR006195">
    <property type="entry name" value="aa-tRNA-synth_II"/>
</dbReference>
<dbReference type="InterPro" id="IPR045864">
    <property type="entry name" value="aa-tRNA-synth_II/BPL/LPL"/>
</dbReference>
<dbReference type="InterPro" id="IPR004154">
    <property type="entry name" value="Anticodon-bd"/>
</dbReference>
<dbReference type="InterPro" id="IPR036621">
    <property type="entry name" value="Anticodon-bd_dom_sf"/>
</dbReference>
<dbReference type="InterPro" id="IPR015807">
    <property type="entry name" value="His-tRNA-ligase"/>
</dbReference>
<dbReference type="InterPro" id="IPR041715">
    <property type="entry name" value="HisRS-like_core"/>
</dbReference>
<dbReference type="InterPro" id="IPR004516">
    <property type="entry name" value="HisRS/HisZ"/>
</dbReference>
<dbReference type="InterPro" id="IPR033656">
    <property type="entry name" value="HisRS_anticodon"/>
</dbReference>
<dbReference type="NCBIfam" id="TIGR00442">
    <property type="entry name" value="hisS"/>
    <property type="match status" value="1"/>
</dbReference>
<dbReference type="PANTHER" id="PTHR43707:SF1">
    <property type="entry name" value="HISTIDINE--TRNA LIGASE, MITOCHONDRIAL-RELATED"/>
    <property type="match status" value="1"/>
</dbReference>
<dbReference type="PANTHER" id="PTHR43707">
    <property type="entry name" value="HISTIDYL-TRNA SYNTHETASE"/>
    <property type="match status" value="1"/>
</dbReference>
<dbReference type="Pfam" id="PF03129">
    <property type="entry name" value="HGTP_anticodon"/>
    <property type="match status" value="1"/>
</dbReference>
<dbReference type="Pfam" id="PF13393">
    <property type="entry name" value="tRNA-synt_His"/>
    <property type="match status" value="1"/>
</dbReference>
<dbReference type="PIRSF" id="PIRSF001549">
    <property type="entry name" value="His-tRNA_synth"/>
    <property type="match status" value="1"/>
</dbReference>
<dbReference type="SUPFAM" id="SSF52954">
    <property type="entry name" value="Class II aaRS ABD-related"/>
    <property type="match status" value="1"/>
</dbReference>
<dbReference type="SUPFAM" id="SSF55681">
    <property type="entry name" value="Class II aaRS and biotin synthetases"/>
    <property type="match status" value="1"/>
</dbReference>
<dbReference type="PROSITE" id="PS50862">
    <property type="entry name" value="AA_TRNA_LIGASE_II"/>
    <property type="match status" value="1"/>
</dbReference>
<sequence>MAKQIQAIRGMNDCLPTQSALWQKVEGTIKQVVSAYGYNEIRMPIVESTHLFKRAIGEVTDVVEKEMYTFEDRNGDSLTLRPEGTAGCVRAGIQNGLLYNQEQRLWYIGPMFRYERPQKGRYRQFHQVGVEVFGLNGPDVDAELIMMTARLWRELGINQHVRLELNSIGSLDARATYREALIAFLEQHLEVLDEDCKRRMHTNPLRVLDTKNPAVQEILVDAPKLSEYLDDDSKAHFAGLCELLDAAGIEYQVNERLVRGLDYYNRTVFEWITESLGAQGTVCGGGRYDGLVEQLGGKATPAVGFAMGVERLVLLMETLELADVRRSVDAYVVTVGEGTMMAGMKLAEKLRENVPGLRVMNHFGGGNFKKQFKRADNVGAAIALVLGENEIADNTVVVKDLRGGEQTTMAQDEVTAKLAELI</sequence>
<protein>
    <recommendedName>
        <fullName>Histidine--tRNA ligase</fullName>
        <ecNumber>6.1.1.21</ecNumber>
    </recommendedName>
    <alternativeName>
        <fullName>Histidyl-tRNA synthetase</fullName>
        <shortName>HisRS</shortName>
    </alternativeName>
</protein>
<keyword id="KW-0030">Aminoacyl-tRNA synthetase</keyword>
<keyword id="KW-0067">ATP-binding</keyword>
<keyword id="KW-0963">Cytoplasm</keyword>
<keyword id="KW-0436">Ligase</keyword>
<keyword id="KW-0547">Nucleotide-binding</keyword>
<keyword id="KW-0648">Protein biosynthesis</keyword>
<keyword id="KW-1185">Reference proteome</keyword>
<gene>
    <name type="primary">hisS</name>
    <name type="ordered locus">PBPRA0764</name>
</gene>
<accession>P62373</accession>
<comment type="catalytic activity">
    <reaction>
        <text>tRNA(His) + L-histidine + ATP = L-histidyl-tRNA(His) + AMP + diphosphate + H(+)</text>
        <dbReference type="Rhea" id="RHEA:17313"/>
        <dbReference type="Rhea" id="RHEA-COMP:9665"/>
        <dbReference type="Rhea" id="RHEA-COMP:9689"/>
        <dbReference type="ChEBI" id="CHEBI:15378"/>
        <dbReference type="ChEBI" id="CHEBI:30616"/>
        <dbReference type="ChEBI" id="CHEBI:33019"/>
        <dbReference type="ChEBI" id="CHEBI:57595"/>
        <dbReference type="ChEBI" id="CHEBI:78442"/>
        <dbReference type="ChEBI" id="CHEBI:78527"/>
        <dbReference type="ChEBI" id="CHEBI:456215"/>
        <dbReference type="EC" id="6.1.1.21"/>
    </reaction>
</comment>
<comment type="subunit">
    <text evidence="1">Homodimer.</text>
</comment>
<comment type="subcellular location">
    <subcellularLocation>
        <location evidence="1">Cytoplasm</location>
    </subcellularLocation>
</comment>
<comment type="similarity">
    <text evidence="2">Belongs to the class-II aminoacyl-tRNA synthetase family.</text>
</comment>
<name>SYH_PHOPR</name>
<proteinExistence type="inferred from homology"/>
<reference key="1">
    <citation type="journal article" date="2005" name="Science">
        <title>Life at depth: Photobacterium profundum genome sequence and expression analysis.</title>
        <authorList>
            <person name="Vezzi A."/>
            <person name="Campanaro S."/>
            <person name="D'Angelo M."/>
            <person name="Simonato F."/>
            <person name="Vitulo N."/>
            <person name="Lauro F.M."/>
            <person name="Cestaro A."/>
            <person name="Malacrida G."/>
            <person name="Simionati B."/>
            <person name="Cannata N."/>
            <person name="Romualdi C."/>
            <person name="Bartlett D.H."/>
            <person name="Valle G."/>
        </authorList>
    </citation>
    <scope>NUCLEOTIDE SEQUENCE [LARGE SCALE GENOMIC DNA]</scope>
    <source>
        <strain>ATCC BAA-1253 / SS9</strain>
    </source>
</reference>
<evidence type="ECO:0000250" key="1"/>
<evidence type="ECO:0000305" key="2"/>